<proteinExistence type="evidence at protein level"/>
<reference key="1">
    <citation type="journal article" date="2010" name="Antimicrob. Agents Chemother.">
        <title>Molecular cloning and heterologous expression of a biosynthetic gene cluster for the antitubercular agent D-cycloserine produced by Streptomyces lavendulae.</title>
        <authorList>
            <person name="Kumagai T."/>
            <person name="Koyama Y."/>
            <person name="Oda K."/>
            <person name="Noda M."/>
            <person name="Matoba Y."/>
            <person name="Sugiyama M."/>
        </authorList>
    </citation>
    <scope>NUCLEOTIDE SEQUENCE [GENOMIC DNA]</scope>
    <scope>FUNCTION</scope>
    <source>
        <strain>ATCC 11924 / 8197-20</strain>
    </source>
</reference>
<reference key="2">
    <citation type="journal article" date="2012" name="Antimicrob. Agents Chemother.">
        <title>Heme protein and hydroxyarginase necessary for biosynthesis of D-cycloserine.</title>
        <authorList>
            <person name="Kumagai T."/>
            <person name="Takagi K."/>
            <person name="Koyama Y."/>
            <person name="Matoba Y."/>
            <person name="Oda K."/>
            <person name="Noda M."/>
            <person name="Sugiyama M."/>
        </authorList>
    </citation>
    <scope>FUNCTION</scope>
    <scope>CATALYTIC ACTIVITY</scope>
    <scope>DISRUPTION PHENOTYPE</scope>
</reference>
<name>DCSB_STRLA</name>
<feature type="chain" id="PRO_0000424061" description="N(omega)-hydroxy-L-arginine amidinohydrolase">
    <location>
        <begin position="1"/>
        <end position="273"/>
    </location>
</feature>
<feature type="binding site" evidence="1">
    <location>
        <position position="109"/>
    </location>
    <ligand>
        <name>Mn(2+)</name>
        <dbReference type="ChEBI" id="CHEBI:29035"/>
        <label>1</label>
    </ligand>
</feature>
<feature type="binding site" evidence="1">
    <location>
        <position position="109"/>
    </location>
    <ligand>
        <name>Mn(2+)</name>
        <dbReference type="ChEBI" id="CHEBI:29035"/>
        <label>2</label>
    </ligand>
</feature>
<feature type="binding site" evidence="1">
    <location>
        <position position="111"/>
    </location>
    <ligand>
        <name>Mn(2+)</name>
        <dbReference type="ChEBI" id="CHEBI:29035"/>
        <label>2</label>
    </ligand>
</feature>
<feature type="binding site" evidence="1">
    <location>
        <position position="113"/>
    </location>
    <ligand>
        <name>Mn(2+)</name>
        <dbReference type="ChEBI" id="CHEBI:29035"/>
        <label>1</label>
    </ligand>
</feature>
<feature type="binding site" evidence="1">
    <location>
        <position position="198"/>
    </location>
    <ligand>
        <name>Mn(2+)</name>
        <dbReference type="ChEBI" id="CHEBI:29035"/>
        <label>1</label>
    </ligand>
</feature>
<feature type="binding site" evidence="1">
    <location>
        <position position="198"/>
    </location>
    <ligand>
        <name>Mn(2+)</name>
        <dbReference type="ChEBI" id="CHEBI:29035"/>
        <label>2</label>
    </ligand>
</feature>
<feature type="binding site" evidence="1">
    <location>
        <position position="200"/>
    </location>
    <ligand>
        <name>Mn(2+)</name>
        <dbReference type="ChEBI" id="CHEBI:29035"/>
        <label>2</label>
    </ligand>
</feature>
<feature type="strand" evidence="5">
    <location>
        <begin position="2"/>
        <end position="7"/>
    </location>
</feature>
<feature type="strand" evidence="5">
    <location>
        <begin position="15"/>
        <end position="17"/>
    </location>
</feature>
<feature type="helix" evidence="5">
    <location>
        <begin position="18"/>
        <end position="33"/>
    </location>
</feature>
<feature type="strand" evidence="5">
    <location>
        <begin position="38"/>
        <end position="41"/>
    </location>
</feature>
<feature type="helix" evidence="5">
    <location>
        <begin position="51"/>
        <end position="57"/>
    </location>
</feature>
<feature type="helix" evidence="5">
    <location>
        <begin position="59"/>
        <end position="74"/>
    </location>
</feature>
<feature type="strand" evidence="5">
    <location>
        <begin position="75"/>
        <end position="85"/>
    </location>
</feature>
<feature type="helix" evidence="5">
    <location>
        <begin position="86"/>
        <end position="88"/>
    </location>
</feature>
<feature type="helix" evidence="5">
    <location>
        <begin position="89"/>
        <end position="99"/>
    </location>
</feature>
<feature type="strand" evidence="5">
    <location>
        <begin position="104"/>
        <end position="108"/>
    </location>
</feature>
<feature type="turn" evidence="5">
    <location>
        <begin position="117"/>
        <end position="119"/>
    </location>
</feature>
<feature type="helix" evidence="5">
    <location>
        <begin position="125"/>
        <end position="127"/>
    </location>
</feature>
<feature type="helix" evidence="5">
    <location>
        <begin position="129"/>
        <end position="133"/>
    </location>
</feature>
<feature type="helix" evidence="5">
    <location>
        <begin position="147"/>
        <end position="149"/>
    </location>
</feature>
<feature type="strand" evidence="5">
    <location>
        <begin position="150"/>
        <end position="154"/>
    </location>
</feature>
<feature type="helix" evidence="5">
    <location>
        <begin position="160"/>
        <end position="169"/>
    </location>
</feature>
<feature type="strand" evidence="5">
    <location>
        <begin position="172"/>
        <end position="174"/>
    </location>
</feature>
<feature type="helix" evidence="5">
    <location>
        <begin position="176"/>
        <end position="178"/>
    </location>
</feature>
<feature type="helix" evidence="5">
    <location>
        <begin position="181"/>
        <end position="188"/>
    </location>
</feature>
<feature type="strand" evidence="5">
    <location>
        <begin position="193"/>
        <end position="198"/>
    </location>
</feature>
<feature type="helix" evidence="5">
    <location>
        <begin position="199"/>
        <end position="201"/>
    </location>
</feature>
<feature type="strand" evidence="5">
    <location>
        <begin position="204"/>
        <end position="207"/>
    </location>
</feature>
<feature type="strand" evidence="5">
    <location>
        <begin position="210"/>
        <end position="212"/>
    </location>
</feature>
<feature type="strand" evidence="5">
    <location>
        <begin position="215"/>
        <end position="217"/>
    </location>
</feature>
<feature type="helix" evidence="5">
    <location>
        <begin position="219"/>
        <end position="228"/>
    </location>
</feature>
<feature type="helix" evidence="5">
    <location>
        <begin position="231"/>
        <end position="233"/>
    </location>
</feature>
<feature type="strand" evidence="5">
    <location>
        <begin position="234"/>
        <end position="240"/>
    </location>
</feature>
<feature type="helix" evidence="5">
    <location>
        <begin position="249"/>
        <end position="270"/>
    </location>
</feature>
<organism>
    <name type="scientific">Streptomyces lavendulae</name>
    <dbReference type="NCBI Taxonomy" id="1914"/>
    <lineage>
        <taxon>Bacteria</taxon>
        <taxon>Bacillati</taxon>
        <taxon>Actinomycetota</taxon>
        <taxon>Actinomycetes</taxon>
        <taxon>Kitasatosporales</taxon>
        <taxon>Streptomycetaceae</taxon>
        <taxon>Streptomyces</taxon>
    </lineage>
</organism>
<accession>D2Z025</accession>
<evidence type="ECO:0000255" key="1">
    <source>
        <dbReference type="PROSITE-ProRule" id="PRU00742"/>
    </source>
</evidence>
<evidence type="ECO:0000269" key="2">
    <source>
    </source>
</evidence>
<evidence type="ECO:0000269" key="3">
    <source>
    </source>
</evidence>
<evidence type="ECO:0000303" key="4">
    <source>
    </source>
</evidence>
<evidence type="ECO:0007829" key="5">
    <source>
        <dbReference type="PDB" id="7EUN"/>
    </source>
</evidence>
<sequence>MIDLIVSQGRVADRAAWMIEGAARTARALEERYGLKGHYVGEPAPHADDDWSVALPQARETLVAVREAATESIKGDNLTVLVNNTCSVSLATLPVVAREHPDAVVLYIDGHGDFNTPETTDTGYLGGMVLSGACGLWDSGHGAGLRPEQAVLVGSRDIDEGERELIRKAGVRVIPPGEATAQAVLDAVKDAPVWIHIDWDVLEPGSIPADYTVPDGMLPAQIRAVFEAIPAERLIGVELAELNAPADSERAEQAVAVILDMVAPAFDAAAARP</sequence>
<keyword id="KW-0002">3D-structure</keyword>
<keyword id="KW-0045">Antibiotic biosynthesis</keyword>
<keyword id="KW-0378">Hydrolase</keyword>
<keyword id="KW-0464">Manganese</keyword>
<keyword id="KW-0479">Metal-binding</keyword>
<dbReference type="EC" id="3.5.3.25"/>
<dbReference type="EMBL" id="AB516431">
    <property type="protein sequence ID" value="BAI70376.1"/>
    <property type="molecule type" value="Genomic_DNA"/>
</dbReference>
<dbReference type="PDB" id="6LUG">
    <property type="method" value="X-ray"/>
    <property type="resolution" value="1.90 A"/>
    <property type="chains" value="A/B=1-273"/>
</dbReference>
<dbReference type="PDB" id="6LUH">
    <property type="method" value="X-ray"/>
    <property type="resolution" value="1.50 A"/>
    <property type="chains" value="A/B=1-273"/>
</dbReference>
<dbReference type="PDB" id="7EUK">
    <property type="method" value="X-ray"/>
    <property type="resolution" value="1.40 A"/>
    <property type="chains" value="A/B=1-273"/>
</dbReference>
<dbReference type="PDB" id="7EUL">
    <property type="method" value="X-ray"/>
    <property type="resolution" value="1.45 A"/>
    <property type="chains" value="A=1-273"/>
</dbReference>
<dbReference type="PDB" id="7EUN">
    <property type="method" value="X-ray"/>
    <property type="resolution" value="1.28 A"/>
    <property type="chains" value="A/B=1-273"/>
</dbReference>
<dbReference type="PDB" id="7EUQ">
    <property type="method" value="X-ray"/>
    <property type="resolution" value="1.80 A"/>
    <property type="chains" value="A/B=1-273"/>
</dbReference>
<dbReference type="PDB" id="9IXC">
    <property type="method" value="X-ray"/>
    <property type="resolution" value="1.26 A"/>
    <property type="chains" value="A/B=1-273"/>
</dbReference>
<dbReference type="PDB" id="9IXD">
    <property type="method" value="X-ray"/>
    <property type="resolution" value="1.50 A"/>
    <property type="chains" value="A/B=1-273"/>
</dbReference>
<dbReference type="PDB" id="9IXE">
    <property type="method" value="X-ray"/>
    <property type="resolution" value="1.58 A"/>
    <property type="chains" value="A/B=1-273"/>
</dbReference>
<dbReference type="PDB" id="9IXF">
    <property type="method" value="X-ray"/>
    <property type="resolution" value="1.75 A"/>
    <property type="chains" value="A/B=1-273"/>
</dbReference>
<dbReference type="PDB" id="9IXG">
    <property type="method" value="X-ray"/>
    <property type="resolution" value="2.14 A"/>
    <property type="chains" value="A/B=1-273"/>
</dbReference>
<dbReference type="PDBsum" id="6LUG"/>
<dbReference type="PDBsum" id="6LUH"/>
<dbReference type="PDBsum" id="7EUK"/>
<dbReference type="PDBsum" id="7EUL"/>
<dbReference type="PDBsum" id="7EUN"/>
<dbReference type="PDBsum" id="7EUQ"/>
<dbReference type="PDBsum" id="9IXC"/>
<dbReference type="PDBsum" id="9IXD"/>
<dbReference type="PDBsum" id="9IXE"/>
<dbReference type="PDBsum" id="9IXF"/>
<dbReference type="PDBsum" id="9IXG"/>
<dbReference type="SMR" id="D2Z025"/>
<dbReference type="KEGG" id="ag:BAI70376"/>
<dbReference type="BioCyc" id="MetaCyc:MONOMER-18017"/>
<dbReference type="BRENDA" id="3.5.3.25">
    <property type="organism ID" value="133"/>
</dbReference>
<dbReference type="GO" id="GO:0005829">
    <property type="term" value="C:cytosol"/>
    <property type="evidence" value="ECO:0007669"/>
    <property type="project" value="TreeGrafter"/>
</dbReference>
<dbReference type="GO" id="GO:0004053">
    <property type="term" value="F:arginase activity"/>
    <property type="evidence" value="ECO:0007669"/>
    <property type="project" value="TreeGrafter"/>
</dbReference>
<dbReference type="GO" id="GO:0016813">
    <property type="term" value="F:hydrolase activity, acting on carbon-nitrogen (but not peptide) bonds, in linear amidines"/>
    <property type="evidence" value="ECO:0000314"/>
    <property type="project" value="UniProtKB"/>
</dbReference>
<dbReference type="GO" id="GO:0030145">
    <property type="term" value="F:manganese ion binding"/>
    <property type="evidence" value="ECO:0007669"/>
    <property type="project" value="TreeGrafter"/>
</dbReference>
<dbReference type="GO" id="GO:0017000">
    <property type="term" value="P:antibiotic biosynthetic process"/>
    <property type="evidence" value="ECO:0007669"/>
    <property type="project" value="UniProtKB-KW"/>
</dbReference>
<dbReference type="GO" id="GO:0019547">
    <property type="term" value="P:arginine catabolic process to ornithine"/>
    <property type="evidence" value="ECO:0007669"/>
    <property type="project" value="TreeGrafter"/>
</dbReference>
<dbReference type="CDD" id="cd09999">
    <property type="entry name" value="Arginase-like_1"/>
    <property type="match status" value="1"/>
</dbReference>
<dbReference type="Gene3D" id="3.40.800.10">
    <property type="entry name" value="Ureohydrolase domain"/>
    <property type="match status" value="1"/>
</dbReference>
<dbReference type="InterPro" id="IPR006035">
    <property type="entry name" value="Ureohydrolase"/>
</dbReference>
<dbReference type="InterPro" id="IPR023696">
    <property type="entry name" value="Ureohydrolase_dom_sf"/>
</dbReference>
<dbReference type="PANTHER" id="PTHR43782">
    <property type="entry name" value="ARGINASE"/>
    <property type="match status" value="1"/>
</dbReference>
<dbReference type="PANTHER" id="PTHR43782:SF3">
    <property type="entry name" value="ARGINASE"/>
    <property type="match status" value="1"/>
</dbReference>
<dbReference type="Pfam" id="PF00491">
    <property type="entry name" value="Arginase"/>
    <property type="match status" value="1"/>
</dbReference>
<dbReference type="SUPFAM" id="SSF52768">
    <property type="entry name" value="Arginase/deacetylase"/>
    <property type="match status" value="1"/>
</dbReference>
<dbReference type="PROSITE" id="PS51409">
    <property type="entry name" value="ARGINASE_2"/>
    <property type="match status" value="1"/>
</dbReference>
<gene>
    <name evidence="4" type="primary">dcsB</name>
</gene>
<comment type="function">
    <text evidence="2 3">Involved in the biosynthesis of the antibiotic D-cycloserine (DCS), a cyclic structural analog of D-alanine, used as an antitubercular agent. Catalyzes the hydrolysis of N(omega)-hydroxy-L-arginine (NHA) to yield hydroxyurea (HU) and L-ornithine.</text>
</comment>
<comment type="catalytic activity">
    <reaction evidence="3">
        <text>N(omega)-hydroxy-L-arginine + H2O = hydroxyurea + L-ornithine</text>
        <dbReference type="Rhea" id="RHEA:36791"/>
        <dbReference type="ChEBI" id="CHEBI:15377"/>
        <dbReference type="ChEBI" id="CHEBI:44423"/>
        <dbReference type="ChEBI" id="CHEBI:46911"/>
        <dbReference type="ChEBI" id="CHEBI:60107"/>
        <dbReference type="EC" id="3.5.3.25"/>
    </reaction>
</comment>
<comment type="cofactor">
    <cofactor evidence="1">
        <name>Mn(2+)</name>
        <dbReference type="ChEBI" id="CHEBI:29035"/>
    </cofactor>
</comment>
<comment type="disruption phenotype">
    <text evidence="3">Cells lacking this gene do not produce cycloserine (DCS).</text>
</comment>
<comment type="similarity">
    <text evidence="1">Belongs to the arginase family.</text>
</comment>
<protein>
    <recommendedName>
        <fullName>N(omega)-hydroxy-L-arginine amidinohydrolase</fullName>
        <ecNumber>3.5.3.25</ecNumber>
    </recommendedName>
    <alternativeName>
        <fullName>hydroxyarginase</fullName>
    </alternativeName>
</protein>